<sequence length="277" mass="30969">MRIAVICFCLLGIASALPVKPTSSGSSEEKQLNNKYPDAVATWLKPDPSQKQTFLAPQNSVSSEETDDNKQNTLPSKSNEDPEQTDDLDDDDDNSQDVNSNDSDDAETTDDPDHSDESHHSDESHQVHFPTDIPTIAVFTPFIPTESANDGRGDRCGLRTEVKIIEVPPINVQSPDATEEDFTSHIESERCMSTKKTSRLTDHSKETNRCELSKELMPKAKDKNKHSNLIESQENSKLSQEFHSLEDKLDLDHKSEEDKHLKIRISHELDSASSEVN</sequence>
<evidence type="ECO:0000250" key="1"/>
<evidence type="ECO:0000250" key="2">
    <source>
        <dbReference type="UniProtKB" id="P31096"/>
    </source>
</evidence>
<evidence type="ECO:0000255" key="3"/>
<evidence type="ECO:0000256" key="4">
    <source>
        <dbReference type="SAM" id="MobiDB-lite"/>
    </source>
</evidence>
<evidence type="ECO:0000305" key="5"/>
<protein>
    <recommendedName>
        <fullName>Osteopontin-K</fullName>
    </recommendedName>
</protein>
<comment type="function">
    <text>Probably involved in cell adhesion.</text>
</comment>
<comment type="subcellular location">
    <subcellularLocation>
        <location>Secreted</location>
    </subcellularLocation>
</comment>
<comment type="tissue specificity">
    <text>Kidney, liver and heart. Weak in bone.</text>
</comment>
<comment type="similarity">
    <text evidence="5">Belongs to the osteopontin family.</text>
</comment>
<reference key="1">
    <citation type="journal article" date="1992" name="J. Bone Miner. Res.">
        <title>Isolation and characterization of a cDNA for osteopontin-k: a kidney cell adhesion molecule with high homology to osteopontins.</title>
        <authorList>
            <person name="Crivello J.F."/>
            <person name="Delvin E."/>
        </authorList>
    </citation>
    <scope>NUCLEOTIDE SEQUENCE [MRNA]</scope>
    <source>
        <tissue>Kidney</tissue>
    </source>
</reference>
<organism>
    <name type="scientific">Bos taurus</name>
    <name type="common">Bovine</name>
    <dbReference type="NCBI Taxonomy" id="9913"/>
    <lineage>
        <taxon>Eukaryota</taxon>
        <taxon>Metazoa</taxon>
        <taxon>Chordata</taxon>
        <taxon>Craniata</taxon>
        <taxon>Vertebrata</taxon>
        <taxon>Euteleostomi</taxon>
        <taxon>Mammalia</taxon>
        <taxon>Eutheria</taxon>
        <taxon>Laurasiatheria</taxon>
        <taxon>Artiodactyla</taxon>
        <taxon>Ruminantia</taxon>
        <taxon>Pecora</taxon>
        <taxon>Bovidae</taxon>
        <taxon>Bovinae</taxon>
        <taxon>Bos</taxon>
    </lineage>
</organism>
<dbReference type="EMBL" id="S45840">
    <property type="protein sequence ID" value="AAB23593.2"/>
    <property type="molecule type" value="mRNA"/>
</dbReference>
<dbReference type="FunCoup" id="P31098">
    <property type="interactions" value="14"/>
</dbReference>
<dbReference type="GlyGen" id="P31098">
    <property type="glycosylation" value="1 site"/>
</dbReference>
<dbReference type="PeptideAtlas" id="P31098"/>
<dbReference type="InParanoid" id="P31098"/>
<dbReference type="Proteomes" id="UP000009136">
    <property type="component" value="Unplaced"/>
</dbReference>
<dbReference type="GO" id="GO:0005615">
    <property type="term" value="C:extracellular space"/>
    <property type="evidence" value="ECO:0000318"/>
    <property type="project" value="GO_Central"/>
</dbReference>
<dbReference type="GO" id="GO:0050840">
    <property type="term" value="F:extracellular matrix binding"/>
    <property type="evidence" value="ECO:0000318"/>
    <property type="project" value="GO_Central"/>
</dbReference>
<dbReference type="GO" id="GO:0007155">
    <property type="term" value="P:cell adhesion"/>
    <property type="evidence" value="ECO:0000318"/>
    <property type="project" value="GO_Central"/>
</dbReference>
<dbReference type="GO" id="GO:0001649">
    <property type="term" value="P:osteoblast differentiation"/>
    <property type="evidence" value="ECO:0000318"/>
    <property type="project" value="GO_Central"/>
</dbReference>
<dbReference type="GO" id="GO:0045780">
    <property type="term" value="P:positive regulation of bone resorption"/>
    <property type="evidence" value="ECO:0000318"/>
    <property type="project" value="GO_Central"/>
</dbReference>
<dbReference type="InterPro" id="IPR002038">
    <property type="entry name" value="Osteopontin"/>
</dbReference>
<dbReference type="InterPro" id="IPR019841">
    <property type="entry name" value="Osteopontin_CS"/>
</dbReference>
<dbReference type="PANTHER" id="PTHR10607">
    <property type="entry name" value="OSTEOPONTIN"/>
    <property type="match status" value="1"/>
</dbReference>
<dbReference type="PANTHER" id="PTHR10607:SF1">
    <property type="entry name" value="OSTEOPONTIN"/>
    <property type="match status" value="1"/>
</dbReference>
<dbReference type="Pfam" id="PF00865">
    <property type="entry name" value="Osteopontin"/>
    <property type="match status" value="2"/>
</dbReference>
<dbReference type="PRINTS" id="PR00216">
    <property type="entry name" value="OSTEOPONTIN"/>
</dbReference>
<dbReference type="SMART" id="SM00017">
    <property type="entry name" value="OSTEO"/>
    <property type="match status" value="1"/>
</dbReference>
<dbReference type="PROSITE" id="PS00884">
    <property type="entry name" value="OSTEOPONTIN"/>
    <property type="match status" value="1"/>
</dbReference>
<accession>P31098</accession>
<feature type="signal peptide" evidence="1">
    <location>
        <begin position="1"/>
        <end position="16"/>
    </location>
</feature>
<feature type="chain" id="PRO_0000020328" description="Osteopontin-K">
    <location>
        <begin position="17"/>
        <end position="277"/>
    </location>
</feature>
<feature type="region of interest" description="Disordered" evidence="4">
    <location>
        <begin position="38"/>
        <end position="129"/>
    </location>
</feature>
<feature type="region of interest" description="Disordered" evidence="4">
    <location>
        <begin position="184"/>
        <end position="277"/>
    </location>
</feature>
<feature type="short sequence motif" description="Cell attachment site">
    <location>
        <begin position="152"/>
        <end position="154"/>
    </location>
</feature>
<feature type="compositionally biased region" description="Polar residues" evidence="4">
    <location>
        <begin position="49"/>
        <end position="63"/>
    </location>
</feature>
<feature type="compositionally biased region" description="Acidic residues" evidence="4">
    <location>
        <begin position="81"/>
        <end position="95"/>
    </location>
</feature>
<feature type="compositionally biased region" description="Basic and acidic residues" evidence="4">
    <location>
        <begin position="111"/>
        <end position="126"/>
    </location>
</feature>
<feature type="compositionally biased region" description="Basic and acidic residues" evidence="4">
    <location>
        <begin position="199"/>
        <end position="221"/>
    </location>
</feature>
<feature type="compositionally biased region" description="Polar residues" evidence="4">
    <location>
        <begin position="227"/>
        <end position="242"/>
    </location>
</feature>
<feature type="compositionally biased region" description="Basic and acidic residues" evidence="4">
    <location>
        <begin position="243"/>
        <end position="270"/>
    </location>
</feature>
<feature type="modified residue" description="Phosphoserine" evidence="2">
    <location>
        <position position="23"/>
    </location>
</feature>
<feature type="modified residue" description="Phosphoserine" evidence="2">
    <location>
        <position position="24"/>
    </location>
</feature>
<feature type="modified residue" description="Phosphoserine" evidence="2">
    <location>
        <position position="26"/>
    </location>
</feature>
<feature type="modified residue" description="Phosphoserine" evidence="2">
    <location>
        <position position="27"/>
    </location>
</feature>
<feature type="modified residue" description="Phosphoserine" evidence="2">
    <location>
        <position position="60"/>
    </location>
</feature>
<feature type="modified residue" description="Phosphoserine" evidence="2">
    <location>
        <position position="62"/>
    </location>
</feature>
<feature type="modified residue" description="Phosphoserine" evidence="2">
    <location>
        <position position="63"/>
    </location>
</feature>
<feature type="modified residue" description="Phosphoserine" evidence="2">
    <location>
        <position position="76"/>
    </location>
</feature>
<feature type="modified residue" description="Phosphoserine" evidence="2">
    <location>
        <position position="78"/>
    </location>
</feature>
<feature type="modified residue" description="Phosphoserine" evidence="2">
    <location>
        <position position="95"/>
    </location>
</feature>
<feature type="modified residue" description="Phosphoserine" evidence="2">
    <location>
        <position position="100"/>
    </location>
</feature>
<feature type="modified residue" description="Phosphoserine" evidence="2">
    <location>
        <position position="103"/>
    </location>
</feature>
<feature type="modified residue" description="Phosphoserine" evidence="2">
    <location>
        <position position="115"/>
    </location>
</feature>
<feature type="modified residue" description="Phosphoserine" evidence="2">
    <location>
        <position position="121"/>
    </location>
</feature>
<feature type="modified residue" description="Phosphoserine" evidence="2">
    <location>
        <position position="124"/>
    </location>
</feature>
<feature type="modified residue" description="Phosphothreonine" evidence="2">
    <location>
        <position position="178"/>
    </location>
</feature>
<feature type="modified residue" description="Phosphoserine" evidence="2">
    <location>
        <position position="184"/>
    </location>
</feature>
<feature type="modified residue" description="Phosphoserine" evidence="2">
    <location>
        <position position="188"/>
    </location>
</feature>
<feature type="modified residue" description="Phosphoserine" evidence="2">
    <location>
        <position position="204"/>
    </location>
</feature>
<feature type="modified residue" description="Phosphoserine" evidence="2">
    <location>
        <position position="232"/>
    </location>
</feature>
<feature type="modified residue" description="Phosphoserine" evidence="2">
    <location>
        <position position="239"/>
    </location>
</feature>
<feature type="modified residue" description="Phosphoserine" evidence="2">
    <location>
        <position position="244"/>
    </location>
</feature>
<feature type="modified residue" description="Phosphoserine" evidence="2">
    <location>
        <position position="255"/>
    </location>
</feature>
<feature type="modified residue" description="Phosphoserine" evidence="2">
    <location>
        <position position="266"/>
    </location>
</feature>
<feature type="modified residue" description="Phosphoserine" evidence="2">
    <location>
        <position position="271"/>
    </location>
</feature>
<feature type="modified residue" description="Phosphoserine" evidence="2">
    <location>
        <position position="273"/>
    </location>
</feature>
<feature type="glycosylation site" description="N-linked (GlcNAc...) asparagine" evidence="3">
    <location>
        <position position="101"/>
    </location>
</feature>
<proteinExistence type="evidence at transcript level"/>
<name>OSTK_BOVIN</name>
<keyword id="KW-0130">Cell adhesion</keyword>
<keyword id="KW-0325">Glycoprotein</keyword>
<keyword id="KW-0597">Phosphoprotein</keyword>
<keyword id="KW-1185">Reference proteome</keyword>
<keyword id="KW-0964">Secreted</keyword>
<keyword id="KW-0730">Sialic acid</keyword>
<keyword id="KW-0732">Signal</keyword>